<proteinExistence type="inferred from homology"/>
<reference key="1">
    <citation type="journal article" date="2004" name="Science">
        <title>Illuminating the evolutionary history of chlamydiae.</title>
        <authorList>
            <person name="Horn M."/>
            <person name="Collingro A."/>
            <person name="Schmitz-Esser S."/>
            <person name="Beier C.L."/>
            <person name="Purkhold U."/>
            <person name="Fartmann B."/>
            <person name="Brandt P."/>
            <person name="Nyakatura G.J."/>
            <person name="Droege M."/>
            <person name="Frishman D."/>
            <person name="Rattei T."/>
            <person name="Mewes H.-W."/>
            <person name="Wagner M."/>
        </authorList>
    </citation>
    <scope>NUCLEOTIDE SEQUENCE [LARGE SCALE GENOMIC DNA]</scope>
    <source>
        <strain>UWE25</strain>
    </source>
</reference>
<comment type="catalytic activity">
    <reaction evidence="1">
        <text>tRNA(Arg) + L-arginine + ATP = L-arginyl-tRNA(Arg) + AMP + diphosphate</text>
        <dbReference type="Rhea" id="RHEA:20301"/>
        <dbReference type="Rhea" id="RHEA-COMP:9658"/>
        <dbReference type="Rhea" id="RHEA-COMP:9673"/>
        <dbReference type="ChEBI" id="CHEBI:30616"/>
        <dbReference type="ChEBI" id="CHEBI:32682"/>
        <dbReference type="ChEBI" id="CHEBI:33019"/>
        <dbReference type="ChEBI" id="CHEBI:78442"/>
        <dbReference type="ChEBI" id="CHEBI:78513"/>
        <dbReference type="ChEBI" id="CHEBI:456215"/>
        <dbReference type="EC" id="6.1.1.19"/>
    </reaction>
</comment>
<comment type="subunit">
    <text evidence="1">Monomer.</text>
</comment>
<comment type="subcellular location">
    <subcellularLocation>
        <location evidence="1">Cytoplasm</location>
    </subcellularLocation>
</comment>
<comment type="similarity">
    <text evidence="1">Belongs to the class-I aminoacyl-tRNA synthetase family.</text>
</comment>
<sequence>MNTLLSVLANLFQQATANAFPDLSVLDPNFQPEITPSTQEKFGHYQFNSAMKLAKLLKKNPRQVAEAIVNQLTDSLPPLSKIEIAGPGFINMTFSTDFLSKNLDILLRDAHFGIPFPEKPEKIIIDFSSPNVAKEMHVGHLRSTVIGDSLARLFEFLGHHVIRLNHLGDWGTAFGMLIAYMKEEAPNVLSGEQKTDLTHLVSWYRSSKKKFDEEPEFKRRAQLEVVALQQGEQKAREAWQMICEISQKAYQEIYQLLDVKIIDRGESFYNPFLPNIVSDLEKKGLVKISDGAKCIFLEGFQNREGENLPLMIQKSDGGYNYDTTDMAAIYHRIYHEKGDRLIYITDAGQATHFQMIFKAAEKAKYLDTTQIRVDHVPFGLVLGTDGKKFRTRSGETEKLIDLLRTAINCADKILSEKNPEMEESERRHLAKSLGIGAIKYADLSCNRVGDYTFSYDRMLRFEGNTAAFLMYAYVRIAGIKRRLKANLPAVLENTHINLEHSTEIELGLHILRFHETLNLMANDLLPNRLTDYLYTLAEKFNAFFRDCRVEGTPQQNTRLLLCEATAKVLKQGLTILGLTTVDKM</sequence>
<organism>
    <name type="scientific">Protochlamydia amoebophila (strain UWE25)</name>
    <dbReference type="NCBI Taxonomy" id="264201"/>
    <lineage>
        <taxon>Bacteria</taxon>
        <taxon>Pseudomonadati</taxon>
        <taxon>Chlamydiota</taxon>
        <taxon>Chlamydiia</taxon>
        <taxon>Parachlamydiales</taxon>
        <taxon>Parachlamydiaceae</taxon>
        <taxon>Candidatus Protochlamydia</taxon>
    </lineage>
</organism>
<feature type="chain" id="PRO_0000242060" description="Arginine--tRNA ligase">
    <location>
        <begin position="1"/>
        <end position="584"/>
    </location>
</feature>
<feature type="short sequence motif" description="'HIGH' region">
    <location>
        <begin position="130"/>
        <end position="140"/>
    </location>
</feature>
<dbReference type="EC" id="6.1.1.19" evidence="1"/>
<dbReference type="EMBL" id="BX908798">
    <property type="protein sequence ID" value="CAF22955.1"/>
    <property type="molecule type" value="Genomic_DNA"/>
</dbReference>
<dbReference type="RefSeq" id="WP_011174781.1">
    <property type="nucleotide sequence ID" value="NC_005861.2"/>
</dbReference>
<dbReference type="SMR" id="Q6MEP4"/>
<dbReference type="STRING" id="264201.pc0231"/>
<dbReference type="KEGG" id="pcu:PC_RS01120"/>
<dbReference type="eggNOG" id="COG0018">
    <property type="taxonomic scope" value="Bacteria"/>
</dbReference>
<dbReference type="HOGENOM" id="CLU_006406_5_1_0"/>
<dbReference type="OrthoDB" id="9805987at2"/>
<dbReference type="Proteomes" id="UP000000529">
    <property type="component" value="Chromosome"/>
</dbReference>
<dbReference type="GO" id="GO:0005737">
    <property type="term" value="C:cytoplasm"/>
    <property type="evidence" value="ECO:0007669"/>
    <property type="project" value="UniProtKB-SubCell"/>
</dbReference>
<dbReference type="GO" id="GO:0004814">
    <property type="term" value="F:arginine-tRNA ligase activity"/>
    <property type="evidence" value="ECO:0007669"/>
    <property type="project" value="UniProtKB-UniRule"/>
</dbReference>
<dbReference type="GO" id="GO:0005524">
    <property type="term" value="F:ATP binding"/>
    <property type="evidence" value="ECO:0007669"/>
    <property type="project" value="UniProtKB-UniRule"/>
</dbReference>
<dbReference type="GO" id="GO:0006420">
    <property type="term" value="P:arginyl-tRNA aminoacylation"/>
    <property type="evidence" value="ECO:0007669"/>
    <property type="project" value="UniProtKB-UniRule"/>
</dbReference>
<dbReference type="CDD" id="cd00671">
    <property type="entry name" value="ArgRS_core"/>
    <property type="match status" value="1"/>
</dbReference>
<dbReference type="FunFam" id="3.40.50.620:FF:000030">
    <property type="entry name" value="Arginine--tRNA ligase"/>
    <property type="match status" value="1"/>
</dbReference>
<dbReference type="FunFam" id="1.10.730.10:FF:000006">
    <property type="entry name" value="Arginyl-tRNA synthetase 2, mitochondrial"/>
    <property type="match status" value="1"/>
</dbReference>
<dbReference type="Gene3D" id="3.30.1360.70">
    <property type="entry name" value="Arginyl tRNA synthetase N-terminal domain"/>
    <property type="match status" value="1"/>
</dbReference>
<dbReference type="Gene3D" id="3.40.50.620">
    <property type="entry name" value="HUPs"/>
    <property type="match status" value="1"/>
</dbReference>
<dbReference type="Gene3D" id="1.10.730.10">
    <property type="entry name" value="Isoleucyl-tRNA Synthetase, Domain 1"/>
    <property type="match status" value="1"/>
</dbReference>
<dbReference type="HAMAP" id="MF_00123">
    <property type="entry name" value="Arg_tRNA_synth"/>
    <property type="match status" value="1"/>
</dbReference>
<dbReference type="InterPro" id="IPR001412">
    <property type="entry name" value="aa-tRNA-synth_I_CS"/>
</dbReference>
<dbReference type="InterPro" id="IPR001278">
    <property type="entry name" value="Arg-tRNA-ligase"/>
</dbReference>
<dbReference type="InterPro" id="IPR005148">
    <property type="entry name" value="Arg-tRNA-synth_N"/>
</dbReference>
<dbReference type="InterPro" id="IPR036695">
    <property type="entry name" value="Arg-tRNA-synth_N_sf"/>
</dbReference>
<dbReference type="InterPro" id="IPR035684">
    <property type="entry name" value="ArgRS_core"/>
</dbReference>
<dbReference type="InterPro" id="IPR008909">
    <property type="entry name" value="DALR_anticod-bd"/>
</dbReference>
<dbReference type="InterPro" id="IPR014729">
    <property type="entry name" value="Rossmann-like_a/b/a_fold"/>
</dbReference>
<dbReference type="InterPro" id="IPR009080">
    <property type="entry name" value="tRNAsynth_Ia_anticodon-bd"/>
</dbReference>
<dbReference type="NCBIfam" id="TIGR00456">
    <property type="entry name" value="argS"/>
    <property type="match status" value="1"/>
</dbReference>
<dbReference type="PANTHER" id="PTHR11956:SF5">
    <property type="entry name" value="ARGININE--TRNA LIGASE, CYTOPLASMIC"/>
    <property type="match status" value="1"/>
</dbReference>
<dbReference type="PANTHER" id="PTHR11956">
    <property type="entry name" value="ARGINYL-TRNA SYNTHETASE"/>
    <property type="match status" value="1"/>
</dbReference>
<dbReference type="Pfam" id="PF03485">
    <property type="entry name" value="Arg_tRNA_synt_N"/>
    <property type="match status" value="1"/>
</dbReference>
<dbReference type="Pfam" id="PF05746">
    <property type="entry name" value="DALR_1"/>
    <property type="match status" value="1"/>
</dbReference>
<dbReference type="Pfam" id="PF00750">
    <property type="entry name" value="tRNA-synt_1d"/>
    <property type="match status" value="1"/>
</dbReference>
<dbReference type="PRINTS" id="PR01038">
    <property type="entry name" value="TRNASYNTHARG"/>
</dbReference>
<dbReference type="SMART" id="SM01016">
    <property type="entry name" value="Arg_tRNA_synt_N"/>
    <property type="match status" value="1"/>
</dbReference>
<dbReference type="SMART" id="SM00836">
    <property type="entry name" value="DALR_1"/>
    <property type="match status" value="1"/>
</dbReference>
<dbReference type="SUPFAM" id="SSF47323">
    <property type="entry name" value="Anticodon-binding domain of a subclass of class I aminoacyl-tRNA synthetases"/>
    <property type="match status" value="1"/>
</dbReference>
<dbReference type="SUPFAM" id="SSF55190">
    <property type="entry name" value="Arginyl-tRNA synthetase (ArgRS), N-terminal 'additional' domain"/>
    <property type="match status" value="1"/>
</dbReference>
<dbReference type="SUPFAM" id="SSF52374">
    <property type="entry name" value="Nucleotidylyl transferase"/>
    <property type="match status" value="1"/>
</dbReference>
<dbReference type="PROSITE" id="PS00178">
    <property type="entry name" value="AA_TRNA_LIGASE_I"/>
    <property type="match status" value="1"/>
</dbReference>
<evidence type="ECO:0000255" key="1">
    <source>
        <dbReference type="HAMAP-Rule" id="MF_00123"/>
    </source>
</evidence>
<protein>
    <recommendedName>
        <fullName evidence="1">Arginine--tRNA ligase</fullName>
        <ecNumber evidence="1">6.1.1.19</ecNumber>
    </recommendedName>
    <alternativeName>
        <fullName evidence="1">Arginyl-tRNA synthetase</fullName>
        <shortName evidence="1">ArgRS</shortName>
    </alternativeName>
</protein>
<keyword id="KW-0030">Aminoacyl-tRNA synthetase</keyword>
<keyword id="KW-0067">ATP-binding</keyword>
<keyword id="KW-0963">Cytoplasm</keyword>
<keyword id="KW-0436">Ligase</keyword>
<keyword id="KW-0547">Nucleotide-binding</keyword>
<keyword id="KW-0648">Protein biosynthesis</keyword>
<keyword id="KW-1185">Reference proteome</keyword>
<accession>Q6MEP4</accession>
<gene>
    <name evidence="1" type="primary">argS</name>
    <name type="ordered locus">pc0231</name>
</gene>
<name>SYR_PARUW</name>